<gene>
    <name evidence="1" type="primary">mutS</name>
    <name type="ordered locus">CLI_1795</name>
</gene>
<proteinExistence type="inferred from homology"/>
<organism>
    <name type="scientific">Clostridium botulinum (strain Langeland / NCTC 10281 / Type F)</name>
    <dbReference type="NCBI Taxonomy" id="441772"/>
    <lineage>
        <taxon>Bacteria</taxon>
        <taxon>Bacillati</taxon>
        <taxon>Bacillota</taxon>
        <taxon>Clostridia</taxon>
        <taxon>Eubacteriales</taxon>
        <taxon>Clostridiaceae</taxon>
        <taxon>Clostridium</taxon>
    </lineage>
</organism>
<accession>A7GE45</accession>
<comment type="function">
    <text evidence="1">This protein is involved in the repair of mismatches in DNA. It is possible that it carries out the mismatch recognition step. This protein has a weak ATPase activity.</text>
</comment>
<comment type="similarity">
    <text evidence="1">Belongs to the DNA mismatch repair MutS family.</text>
</comment>
<feature type="chain" id="PRO_0000335139" description="DNA mismatch repair protein MutS">
    <location>
        <begin position="1"/>
        <end position="932"/>
    </location>
</feature>
<feature type="binding site" evidence="1">
    <location>
        <begin position="615"/>
        <end position="622"/>
    </location>
    <ligand>
        <name>ATP</name>
        <dbReference type="ChEBI" id="CHEBI:30616"/>
    </ligand>
</feature>
<name>MUTS_CLOBL</name>
<protein>
    <recommendedName>
        <fullName evidence="1">DNA mismatch repair protein MutS</fullName>
    </recommendedName>
</protein>
<sequence>MGLTPMMRQYLEVKESCKDCILFFRLGDFYEMFFEDAKVASKELELVLTGRDCGLEERAPMCGIPYHAANTYVGRLVSAGYKIAICEQLEDPSASKGIVKRGIIKIITPGTYTDSSFLEENKNNYIMSFYLDDNMCAMSFADISTGEFNSTHSNFKEAVVLDEISKFAPREIVLEENIKESFIHTIKERFPNISISKIKEENFDYNIDNNLKEQFNNFNENEYETIVKKSANGLLYYIFHTQKNILSNINKIDYYSIVDYLTIDVNSRRNLEITENLREKTKKGSLLWVLDKTNTAMGGRQLRRWIEQPLINKNPIENRLNAVEELLNNISLQEDLKEDLKSIYDIERIVGKVASKSVNAKELISLKCSIGKVPYIKKYLSGFKSDLFLNMEQCIDTLEDIHKLLDKALLDNPSLSVKEGNIIKEGFNEEVDSLREAKSNGKKWIASLEQKEKEETGIKSLKVSYNKVFGYFIEITKANLNLVPEGRYIRKQTLSNAERYITPELKEMEEKILGAEEKLIDIEYKLFTEIRDFIEENIDRMQKTARIISDIDCLCSLATVALENNYIKPNINAKDEILIEEGRHPVVEKVIPKGEFISNDSLIDTKENQLILITGPNMAGKSTYMRQVALITIMAQIGSFVPAKKANISICDKIFTRIGASDDLAAGKSTFMVEMWEVSNILKNATSKSLVLLDEVGRGTSTYDGLSIAWSVIEYICNNKNLRCKTLFATHYHELTKLEDNIEGVKNYSVSVSELENEIVFLRKIIRGGADQSYGIEVAKLAGLPSPVINRAKEILQHIEGDKEENSLNIAPSKEYKSKDYIEVSKDTLNTKNNLGSEIKHDTLSETNTATIIEDESTKEHLSSNKKQINCRTNDEKSIKKEVAVDSFQINFEYIKIDKIIEEIKNIDILNMTPMEGFNKLYDIINKTKDID</sequence>
<keyword id="KW-0067">ATP-binding</keyword>
<keyword id="KW-0227">DNA damage</keyword>
<keyword id="KW-0234">DNA repair</keyword>
<keyword id="KW-0238">DNA-binding</keyword>
<keyword id="KW-0547">Nucleotide-binding</keyword>
<evidence type="ECO:0000255" key="1">
    <source>
        <dbReference type="HAMAP-Rule" id="MF_00096"/>
    </source>
</evidence>
<reference key="1">
    <citation type="submission" date="2007-06" db="EMBL/GenBank/DDBJ databases">
        <authorList>
            <person name="Brinkac L.M."/>
            <person name="Daugherty S."/>
            <person name="Dodson R.J."/>
            <person name="Madupu R."/>
            <person name="Brown J.L."/>
            <person name="Bruce D."/>
            <person name="Detter C."/>
            <person name="Munk C."/>
            <person name="Smith L.A."/>
            <person name="Smith T.J."/>
            <person name="White O."/>
            <person name="Brettin T.S."/>
        </authorList>
    </citation>
    <scope>NUCLEOTIDE SEQUENCE [LARGE SCALE GENOMIC DNA]</scope>
    <source>
        <strain>Langeland / NCTC 10281 / Type F</strain>
    </source>
</reference>
<dbReference type="EMBL" id="CP000728">
    <property type="protein sequence ID" value="ABS41447.1"/>
    <property type="molecule type" value="Genomic_DNA"/>
</dbReference>
<dbReference type="RefSeq" id="WP_012099793.1">
    <property type="nucleotide sequence ID" value="NC_009699.1"/>
</dbReference>
<dbReference type="SMR" id="A7GE45"/>
<dbReference type="KEGG" id="cbf:CLI_1795"/>
<dbReference type="HOGENOM" id="CLU_002472_3_0_9"/>
<dbReference type="Proteomes" id="UP000002410">
    <property type="component" value="Chromosome"/>
</dbReference>
<dbReference type="GO" id="GO:0005829">
    <property type="term" value="C:cytosol"/>
    <property type="evidence" value="ECO:0007669"/>
    <property type="project" value="TreeGrafter"/>
</dbReference>
<dbReference type="GO" id="GO:0005524">
    <property type="term" value="F:ATP binding"/>
    <property type="evidence" value="ECO:0007669"/>
    <property type="project" value="UniProtKB-UniRule"/>
</dbReference>
<dbReference type="GO" id="GO:0140664">
    <property type="term" value="F:ATP-dependent DNA damage sensor activity"/>
    <property type="evidence" value="ECO:0007669"/>
    <property type="project" value="InterPro"/>
</dbReference>
<dbReference type="GO" id="GO:0003684">
    <property type="term" value="F:damaged DNA binding"/>
    <property type="evidence" value="ECO:0007669"/>
    <property type="project" value="UniProtKB-UniRule"/>
</dbReference>
<dbReference type="GO" id="GO:0030983">
    <property type="term" value="F:mismatched DNA binding"/>
    <property type="evidence" value="ECO:0007669"/>
    <property type="project" value="InterPro"/>
</dbReference>
<dbReference type="GO" id="GO:0006298">
    <property type="term" value="P:mismatch repair"/>
    <property type="evidence" value="ECO:0007669"/>
    <property type="project" value="UniProtKB-UniRule"/>
</dbReference>
<dbReference type="CDD" id="cd03284">
    <property type="entry name" value="ABC_MutS1"/>
    <property type="match status" value="1"/>
</dbReference>
<dbReference type="FunFam" id="1.10.1420.10:FF:000007">
    <property type="entry name" value="DNA mismatch repair protein MutS"/>
    <property type="match status" value="1"/>
</dbReference>
<dbReference type="FunFam" id="3.40.1170.10:FF:000001">
    <property type="entry name" value="DNA mismatch repair protein MutS"/>
    <property type="match status" value="1"/>
</dbReference>
<dbReference type="FunFam" id="3.40.50.300:FF:001579">
    <property type="entry name" value="DNA mismatch repair protein MutS"/>
    <property type="match status" value="1"/>
</dbReference>
<dbReference type="Gene3D" id="1.10.1420.10">
    <property type="match status" value="2"/>
</dbReference>
<dbReference type="Gene3D" id="3.40.1170.10">
    <property type="entry name" value="DNA repair protein MutS, domain I"/>
    <property type="match status" value="1"/>
</dbReference>
<dbReference type="Gene3D" id="3.30.420.110">
    <property type="entry name" value="MutS, connector domain"/>
    <property type="match status" value="1"/>
</dbReference>
<dbReference type="Gene3D" id="3.40.50.300">
    <property type="entry name" value="P-loop containing nucleotide triphosphate hydrolases"/>
    <property type="match status" value="1"/>
</dbReference>
<dbReference type="HAMAP" id="MF_00096">
    <property type="entry name" value="MutS"/>
    <property type="match status" value="1"/>
</dbReference>
<dbReference type="InterPro" id="IPR005748">
    <property type="entry name" value="DNA_mismatch_repair_MutS"/>
</dbReference>
<dbReference type="InterPro" id="IPR007695">
    <property type="entry name" value="DNA_mismatch_repair_MutS-lik_N"/>
</dbReference>
<dbReference type="InterPro" id="IPR017261">
    <property type="entry name" value="DNA_mismatch_repair_MutS/MSH"/>
</dbReference>
<dbReference type="InterPro" id="IPR000432">
    <property type="entry name" value="DNA_mismatch_repair_MutS_C"/>
</dbReference>
<dbReference type="InterPro" id="IPR007861">
    <property type="entry name" value="DNA_mismatch_repair_MutS_clamp"/>
</dbReference>
<dbReference type="InterPro" id="IPR007696">
    <property type="entry name" value="DNA_mismatch_repair_MutS_core"/>
</dbReference>
<dbReference type="InterPro" id="IPR016151">
    <property type="entry name" value="DNA_mismatch_repair_MutS_N"/>
</dbReference>
<dbReference type="InterPro" id="IPR036187">
    <property type="entry name" value="DNA_mismatch_repair_MutS_sf"/>
</dbReference>
<dbReference type="InterPro" id="IPR007860">
    <property type="entry name" value="DNA_mmatch_repair_MutS_con_dom"/>
</dbReference>
<dbReference type="InterPro" id="IPR045076">
    <property type="entry name" value="MutS"/>
</dbReference>
<dbReference type="InterPro" id="IPR036678">
    <property type="entry name" value="MutS_con_dom_sf"/>
</dbReference>
<dbReference type="InterPro" id="IPR027417">
    <property type="entry name" value="P-loop_NTPase"/>
</dbReference>
<dbReference type="NCBIfam" id="TIGR01070">
    <property type="entry name" value="mutS1"/>
    <property type="match status" value="1"/>
</dbReference>
<dbReference type="NCBIfam" id="NF003810">
    <property type="entry name" value="PRK05399.1"/>
    <property type="match status" value="1"/>
</dbReference>
<dbReference type="PANTHER" id="PTHR11361:SF34">
    <property type="entry name" value="DNA MISMATCH REPAIR PROTEIN MSH1, MITOCHONDRIAL"/>
    <property type="match status" value="1"/>
</dbReference>
<dbReference type="PANTHER" id="PTHR11361">
    <property type="entry name" value="DNA MISMATCH REPAIR PROTEIN MUTS FAMILY MEMBER"/>
    <property type="match status" value="1"/>
</dbReference>
<dbReference type="Pfam" id="PF01624">
    <property type="entry name" value="MutS_I"/>
    <property type="match status" value="1"/>
</dbReference>
<dbReference type="Pfam" id="PF05188">
    <property type="entry name" value="MutS_II"/>
    <property type="match status" value="1"/>
</dbReference>
<dbReference type="Pfam" id="PF05192">
    <property type="entry name" value="MutS_III"/>
    <property type="match status" value="1"/>
</dbReference>
<dbReference type="Pfam" id="PF05190">
    <property type="entry name" value="MutS_IV"/>
    <property type="match status" value="1"/>
</dbReference>
<dbReference type="Pfam" id="PF00488">
    <property type="entry name" value="MutS_V"/>
    <property type="match status" value="1"/>
</dbReference>
<dbReference type="PIRSF" id="PIRSF037677">
    <property type="entry name" value="DNA_mis_repair_Msh6"/>
    <property type="match status" value="1"/>
</dbReference>
<dbReference type="SMART" id="SM00534">
    <property type="entry name" value="MUTSac"/>
    <property type="match status" value="1"/>
</dbReference>
<dbReference type="SMART" id="SM00533">
    <property type="entry name" value="MUTSd"/>
    <property type="match status" value="1"/>
</dbReference>
<dbReference type="SUPFAM" id="SSF55271">
    <property type="entry name" value="DNA repair protein MutS, domain I"/>
    <property type="match status" value="1"/>
</dbReference>
<dbReference type="SUPFAM" id="SSF53150">
    <property type="entry name" value="DNA repair protein MutS, domain II"/>
    <property type="match status" value="1"/>
</dbReference>
<dbReference type="SUPFAM" id="SSF48334">
    <property type="entry name" value="DNA repair protein MutS, domain III"/>
    <property type="match status" value="1"/>
</dbReference>
<dbReference type="SUPFAM" id="SSF52540">
    <property type="entry name" value="P-loop containing nucleoside triphosphate hydrolases"/>
    <property type="match status" value="1"/>
</dbReference>
<dbReference type="PROSITE" id="PS00486">
    <property type="entry name" value="DNA_MISMATCH_REPAIR_2"/>
    <property type="match status" value="1"/>
</dbReference>